<keyword id="KW-0067">ATP-binding</keyword>
<keyword id="KW-0997">Cell inner membrane</keyword>
<keyword id="KW-1003">Cell membrane</keyword>
<keyword id="KW-0406">Ion transport</keyword>
<keyword id="KW-0472">Membrane</keyword>
<keyword id="KW-0547">Nucleotide-binding</keyword>
<keyword id="KW-0630">Potassium</keyword>
<keyword id="KW-0633">Potassium transport</keyword>
<keyword id="KW-0812">Transmembrane</keyword>
<keyword id="KW-1133">Transmembrane helix</keyword>
<keyword id="KW-0813">Transport</keyword>
<protein>
    <recommendedName>
        <fullName evidence="1">Potassium-transporting ATPase KdpC subunit</fullName>
    </recommendedName>
    <alternativeName>
        <fullName evidence="1">ATP phosphohydrolase [potassium-transporting] C chain</fullName>
    </alternativeName>
    <alternativeName>
        <fullName evidence="1">Potassium-binding and translocating subunit C</fullName>
    </alternativeName>
    <alternativeName>
        <fullName evidence="1">Potassium-translocating ATPase C chain</fullName>
    </alternativeName>
</protein>
<gene>
    <name evidence="1" type="primary">kdpC</name>
    <name type="ordered locus">BWG_0556</name>
</gene>
<proteinExistence type="inferred from homology"/>
<sequence>MSGLRPALSTFIFLLLITGGVYPLLTTVLGQWWFPWQANGSLIREGDTVRGSALIGQNFTGNGYFHGRPSATAEMPYNPQASGGSNLAVSNPELDKLIAARVAALRAANPDASASVPVELVTASASGLDNNITPQAAAWQIPRVAKARNLSVEQLTQLIAKYSQQPLVKYIGQPVVNIVELNLALDKLDE</sequence>
<reference key="1">
    <citation type="journal article" date="2009" name="J. Bacteriol.">
        <title>Genomic sequencing reveals regulatory mutations and recombinational events in the widely used MC4100 lineage of Escherichia coli K-12.</title>
        <authorList>
            <person name="Ferenci T."/>
            <person name="Zhou Z."/>
            <person name="Betteridge T."/>
            <person name="Ren Y."/>
            <person name="Liu Y."/>
            <person name="Feng L."/>
            <person name="Reeves P.R."/>
            <person name="Wang L."/>
        </authorList>
    </citation>
    <scope>NUCLEOTIDE SEQUENCE [LARGE SCALE GENOMIC DNA]</scope>
    <source>
        <strain>K12 / MC4100 / BW2952</strain>
    </source>
</reference>
<dbReference type="EMBL" id="CP001396">
    <property type="protein sequence ID" value="ACR64083.1"/>
    <property type="molecule type" value="Genomic_DNA"/>
</dbReference>
<dbReference type="RefSeq" id="WP_001300431.1">
    <property type="nucleotide sequence ID" value="NC_012759.1"/>
</dbReference>
<dbReference type="SMR" id="C4ZWH2"/>
<dbReference type="KEGG" id="ebw:BWG_0556"/>
<dbReference type="HOGENOM" id="CLU_077094_2_0_6"/>
<dbReference type="GO" id="GO:0005886">
    <property type="term" value="C:plasma membrane"/>
    <property type="evidence" value="ECO:0007669"/>
    <property type="project" value="UniProtKB-SubCell"/>
</dbReference>
<dbReference type="GO" id="GO:0005524">
    <property type="term" value="F:ATP binding"/>
    <property type="evidence" value="ECO:0007669"/>
    <property type="project" value="UniProtKB-UniRule"/>
</dbReference>
<dbReference type="GO" id="GO:0008556">
    <property type="term" value="F:P-type potassium transmembrane transporter activity"/>
    <property type="evidence" value="ECO:0007669"/>
    <property type="project" value="InterPro"/>
</dbReference>
<dbReference type="HAMAP" id="MF_00276">
    <property type="entry name" value="KdpC"/>
    <property type="match status" value="1"/>
</dbReference>
<dbReference type="InterPro" id="IPR003820">
    <property type="entry name" value="KdpC"/>
</dbReference>
<dbReference type="NCBIfam" id="TIGR00681">
    <property type="entry name" value="kdpC"/>
    <property type="match status" value="1"/>
</dbReference>
<dbReference type="NCBIfam" id="NF001454">
    <property type="entry name" value="PRK00315.1"/>
    <property type="match status" value="1"/>
</dbReference>
<dbReference type="PANTHER" id="PTHR30042">
    <property type="entry name" value="POTASSIUM-TRANSPORTING ATPASE C CHAIN"/>
    <property type="match status" value="1"/>
</dbReference>
<dbReference type="PANTHER" id="PTHR30042:SF2">
    <property type="entry name" value="POTASSIUM-TRANSPORTING ATPASE KDPC SUBUNIT"/>
    <property type="match status" value="1"/>
</dbReference>
<dbReference type="Pfam" id="PF02669">
    <property type="entry name" value="KdpC"/>
    <property type="match status" value="1"/>
</dbReference>
<dbReference type="PIRSF" id="PIRSF001296">
    <property type="entry name" value="K_ATPase_KdpC"/>
    <property type="match status" value="1"/>
</dbReference>
<accession>C4ZWH2</accession>
<feature type="chain" id="PRO_1000204793" description="Potassium-transporting ATPase KdpC subunit">
    <location>
        <begin position="1"/>
        <end position="190"/>
    </location>
</feature>
<feature type="transmembrane region" description="Helical" evidence="1">
    <location>
        <begin position="10"/>
        <end position="30"/>
    </location>
</feature>
<comment type="function">
    <text evidence="1">Part of the high-affinity ATP-driven potassium transport (or Kdp) system, which catalyzes the hydrolysis of ATP coupled with the electrogenic transport of potassium into the cytoplasm. This subunit acts as a catalytic chaperone that increases the ATP-binding affinity of the ATP-hydrolyzing subunit KdpB by the formation of a transient KdpB/KdpC/ATP ternary complex.</text>
</comment>
<comment type="subunit">
    <text evidence="1">The system is composed of three essential subunits: KdpA, KdpB and KdpC.</text>
</comment>
<comment type="subcellular location">
    <subcellularLocation>
        <location evidence="1">Cell inner membrane</location>
        <topology evidence="1">Single-pass membrane protein</topology>
    </subcellularLocation>
</comment>
<comment type="similarity">
    <text evidence="1">Belongs to the KdpC family.</text>
</comment>
<evidence type="ECO:0000255" key="1">
    <source>
        <dbReference type="HAMAP-Rule" id="MF_00276"/>
    </source>
</evidence>
<name>KDPC_ECOBW</name>
<organism>
    <name type="scientific">Escherichia coli (strain K12 / MC4100 / BW2952)</name>
    <dbReference type="NCBI Taxonomy" id="595496"/>
    <lineage>
        <taxon>Bacteria</taxon>
        <taxon>Pseudomonadati</taxon>
        <taxon>Pseudomonadota</taxon>
        <taxon>Gammaproteobacteria</taxon>
        <taxon>Enterobacterales</taxon>
        <taxon>Enterobacteriaceae</taxon>
        <taxon>Escherichia</taxon>
    </lineage>
</organism>